<protein>
    <recommendedName>
        <fullName evidence="1">NADH-quinone oxidoreductase subunit D</fullName>
        <ecNumber evidence="1">7.1.1.-</ecNumber>
    </recommendedName>
    <alternativeName>
        <fullName evidence="1">NADH dehydrogenase I subunit D</fullName>
    </alternativeName>
    <alternativeName>
        <fullName evidence="1">NDH-1 subunit D</fullName>
    </alternativeName>
</protein>
<sequence>MAEVRNYTFNFGPQHPAAHGVLRLIVEVDGEVIQRIDPHIGLLHRATEKLAESKPYNQTIGYMDRLDYVSMMANEHGYVLAIEKLLGIEPPIRAKYIRTMFDEITRILNHLLWLGAHALDVGAMTVFLYCFREREDLMDCYEAVSGARMHATYYRPGGVYRDLPDSMPKYKPSRWHNEKAVKKMNEAREGSLLDFIWDFTARFPNLIDEYESLLTDNRIWKQRTVGIGVVSAERALQLGFTGPMLRASGVEWDLRKKQPYAAYDRVDFDIPIGREGDCYDRYLVRIEEMRQSNRIIRQCVEWLRKNPGPVIIDDYKIVPPQREVMKRDMEALIHHFKLFTEGYIVPEGEAYAAVEQPKGEFGVYIVSDGANKPYRVKVRAASYPHLAAMNEMCRGHMIADLVAIISSIDIVFGEIDR</sequence>
<gene>
    <name evidence="1" type="primary">nuoD</name>
    <name type="ordered locus">CBUD_0548</name>
</gene>
<name>NUOD_COXBN</name>
<dbReference type="EC" id="7.1.1.-" evidence="1"/>
<dbReference type="EMBL" id="CP000733">
    <property type="protein sequence ID" value="ABS78327.2"/>
    <property type="status" value="ALT_INIT"/>
    <property type="molecule type" value="Genomic_DNA"/>
</dbReference>
<dbReference type="SMR" id="A9KBK7"/>
<dbReference type="KEGG" id="cbd:CBUD_0548"/>
<dbReference type="HOGENOM" id="CLU_015134_1_1_6"/>
<dbReference type="Proteomes" id="UP000008555">
    <property type="component" value="Chromosome"/>
</dbReference>
<dbReference type="GO" id="GO:0005886">
    <property type="term" value="C:plasma membrane"/>
    <property type="evidence" value="ECO:0007669"/>
    <property type="project" value="UniProtKB-SubCell"/>
</dbReference>
<dbReference type="GO" id="GO:0051287">
    <property type="term" value="F:NAD binding"/>
    <property type="evidence" value="ECO:0007669"/>
    <property type="project" value="InterPro"/>
</dbReference>
<dbReference type="GO" id="GO:0050136">
    <property type="term" value="F:NADH:ubiquinone reductase (non-electrogenic) activity"/>
    <property type="evidence" value="ECO:0007669"/>
    <property type="project" value="UniProtKB-UniRule"/>
</dbReference>
<dbReference type="GO" id="GO:0048038">
    <property type="term" value="F:quinone binding"/>
    <property type="evidence" value="ECO:0007669"/>
    <property type="project" value="UniProtKB-KW"/>
</dbReference>
<dbReference type="FunFam" id="1.10.645.10:FF:000005">
    <property type="entry name" value="NADH-quinone oxidoreductase subunit D"/>
    <property type="match status" value="1"/>
</dbReference>
<dbReference type="Gene3D" id="1.10.645.10">
    <property type="entry name" value="Cytochrome-c3 Hydrogenase, chain B"/>
    <property type="match status" value="1"/>
</dbReference>
<dbReference type="HAMAP" id="MF_01358">
    <property type="entry name" value="NDH1_NuoD"/>
    <property type="match status" value="1"/>
</dbReference>
<dbReference type="InterPro" id="IPR001135">
    <property type="entry name" value="NADH_Q_OxRdtase_suD"/>
</dbReference>
<dbReference type="InterPro" id="IPR014029">
    <property type="entry name" value="NADH_UbQ_OxRdtase_49kDa_CS"/>
</dbReference>
<dbReference type="InterPro" id="IPR022885">
    <property type="entry name" value="NDH1_su_D/H"/>
</dbReference>
<dbReference type="InterPro" id="IPR029014">
    <property type="entry name" value="NiFe-Hase_large"/>
</dbReference>
<dbReference type="NCBIfam" id="TIGR01962">
    <property type="entry name" value="NuoD"/>
    <property type="match status" value="1"/>
</dbReference>
<dbReference type="NCBIfam" id="NF004739">
    <property type="entry name" value="PRK06075.1"/>
    <property type="match status" value="1"/>
</dbReference>
<dbReference type="PANTHER" id="PTHR11993:SF10">
    <property type="entry name" value="NADH DEHYDROGENASE [UBIQUINONE] IRON-SULFUR PROTEIN 2, MITOCHONDRIAL"/>
    <property type="match status" value="1"/>
</dbReference>
<dbReference type="PANTHER" id="PTHR11993">
    <property type="entry name" value="NADH-UBIQUINONE OXIDOREDUCTASE 49 KDA SUBUNIT"/>
    <property type="match status" value="1"/>
</dbReference>
<dbReference type="Pfam" id="PF00346">
    <property type="entry name" value="Complex1_49kDa"/>
    <property type="match status" value="1"/>
</dbReference>
<dbReference type="SUPFAM" id="SSF56762">
    <property type="entry name" value="HydB/Nqo4-like"/>
    <property type="match status" value="1"/>
</dbReference>
<dbReference type="PROSITE" id="PS00535">
    <property type="entry name" value="COMPLEX1_49K"/>
    <property type="match status" value="1"/>
</dbReference>
<keyword id="KW-0997">Cell inner membrane</keyword>
<keyword id="KW-1003">Cell membrane</keyword>
<keyword id="KW-0472">Membrane</keyword>
<keyword id="KW-0520">NAD</keyword>
<keyword id="KW-0874">Quinone</keyword>
<keyword id="KW-1278">Translocase</keyword>
<keyword id="KW-0813">Transport</keyword>
<keyword id="KW-0830">Ubiquinone</keyword>
<evidence type="ECO:0000255" key="1">
    <source>
        <dbReference type="HAMAP-Rule" id="MF_01358"/>
    </source>
</evidence>
<evidence type="ECO:0000305" key="2"/>
<organism>
    <name type="scientific">Coxiella burnetii (strain Dugway 5J108-111)</name>
    <dbReference type="NCBI Taxonomy" id="434922"/>
    <lineage>
        <taxon>Bacteria</taxon>
        <taxon>Pseudomonadati</taxon>
        <taxon>Pseudomonadota</taxon>
        <taxon>Gammaproteobacteria</taxon>
        <taxon>Legionellales</taxon>
        <taxon>Coxiellaceae</taxon>
        <taxon>Coxiella</taxon>
    </lineage>
</organism>
<comment type="function">
    <text evidence="1">NDH-1 shuttles electrons from NADH, via FMN and iron-sulfur (Fe-S) centers, to quinones in the respiratory chain. The immediate electron acceptor for the enzyme in this species is believed to be ubiquinone. Couples the redox reaction to proton translocation (for every two electrons transferred, four hydrogen ions are translocated across the cytoplasmic membrane), and thus conserves the redox energy in a proton gradient.</text>
</comment>
<comment type="catalytic activity">
    <reaction evidence="1">
        <text>a quinone + NADH + 5 H(+)(in) = a quinol + NAD(+) + 4 H(+)(out)</text>
        <dbReference type="Rhea" id="RHEA:57888"/>
        <dbReference type="ChEBI" id="CHEBI:15378"/>
        <dbReference type="ChEBI" id="CHEBI:24646"/>
        <dbReference type="ChEBI" id="CHEBI:57540"/>
        <dbReference type="ChEBI" id="CHEBI:57945"/>
        <dbReference type="ChEBI" id="CHEBI:132124"/>
    </reaction>
</comment>
<comment type="subunit">
    <text evidence="1">NDH-1 is composed of 14 different subunits. Subunits NuoB, C, D, E, F, and G constitute the peripheral sector of the complex.</text>
</comment>
<comment type="subcellular location">
    <subcellularLocation>
        <location evidence="1">Cell inner membrane</location>
        <topology evidence="1">Peripheral membrane protein</topology>
        <orientation evidence="1">Cytoplasmic side</orientation>
    </subcellularLocation>
</comment>
<comment type="similarity">
    <text evidence="1">Belongs to the complex I 49 kDa subunit family.</text>
</comment>
<comment type="sequence caution" evidence="2">
    <conflict type="erroneous initiation">
        <sequence resource="EMBL-CDS" id="ABS78327"/>
    </conflict>
</comment>
<accession>A9KBK7</accession>
<feature type="chain" id="PRO_0000371856" description="NADH-quinone oxidoreductase subunit D">
    <location>
        <begin position="1"/>
        <end position="417"/>
    </location>
</feature>
<reference key="1">
    <citation type="journal article" date="2009" name="Infect. Immun.">
        <title>Comparative genomics reveal extensive transposon-mediated genomic plasticity and diversity among potential effector proteins within the genus Coxiella.</title>
        <authorList>
            <person name="Beare P.A."/>
            <person name="Unsworth N."/>
            <person name="Andoh M."/>
            <person name="Voth D.E."/>
            <person name="Omsland A."/>
            <person name="Gilk S.D."/>
            <person name="Williams K.P."/>
            <person name="Sobral B.W."/>
            <person name="Kupko J.J. III"/>
            <person name="Porcella S.F."/>
            <person name="Samuel J.E."/>
            <person name="Heinzen R.A."/>
        </authorList>
    </citation>
    <scope>NUCLEOTIDE SEQUENCE [LARGE SCALE GENOMIC DNA]</scope>
    <source>
        <strain>Dugway 5J108-111</strain>
    </source>
</reference>
<proteinExistence type="inferred from homology"/>